<keyword id="KW-0378">Hydrolase</keyword>
<keyword id="KW-0479">Metal-binding</keyword>
<keyword id="KW-0862">Zinc</keyword>
<evidence type="ECO:0000255" key="1">
    <source>
        <dbReference type="HAMAP-Rule" id="MF_01561"/>
    </source>
</evidence>
<reference key="1">
    <citation type="journal article" date="2009" name="PLoS Genet.">
        <title>Organised genome dynamics in the Escherichia coli species results in highly diverse adaptive paths.</title>
        <authorList>
            <person name="Touchon M."/>
            <person name="Hoede C."/>
            <person name="Tenaillon O."/>
            <person name="Barbe V."/>
            <person name="Baeriswyl S."/>
            <person name="Bidet P."/>
            <person name="Bingen E."/>
            <person name="Bonacorsi S."/>
            <person name="Bouchier C."/>
            <person name="Bouvet O."/>
            <person name="Calteau A."/>
            <person name="Chiapello H."/>
            <person name="Clermont O."/>
            <person name="Cruveiller S."/>
            <person name="Danchin A."/>
            <person name="Diard M."/>
            <person name="Dossat C."/>
            <person name="Karoui M.E."/>
            <person name="Frapy E."/>
            <person name="Garry L."/>
            <person name="Ghigo J.M."/>
            <person name="Gilles A.M."/>
            <person name="Johnson J."/>
            <person name="Le Bouguenec C."/>
            <person name="Lescat M."/>
            <person name="Mangenot S."/>
            <person name="Martinez-Jehanne V."/>
            <person name="Matic I."/>
            <person name="Nassif X."/>
            <person name="Oztas S."/>
            <person name="Petit M.A."/>
            <person name="Pichon C."/>
            <person name="Rouy Z."/>
            <person name="Ruf C.S."/>
            <person name="Schneider D."/>
            <person name="Tourret J."/>
            <person name="Vacherie B."/>
            <person name="Vallenet D."/>
            <person name="Medigue C."/>
            <person name="Rocha E.P.C."/>
            <person name="Denamur E."/>
        </authorList>
    </citation>
    <scope>NUCLEOTIDE SEQUENCE [LARGE SCALE GENOMIC DNA]</scope>
    <source>
        <strain>UMN026 / ExPEC</strain>
    </source>
</reference>
<name>YCDX_ECOLU</name>
<accession>B7N3I1</accession>
<sequence>MYPVDLHMHTVASTHAYSTLSDYIAQAKQKGIKLFAITDHGPDMEDAPHHWHFINMRIWPRVVDGVGILRGIEANIKNVDGEIDCSGKMFDSLDLIIAGFHEPVFAPHDKATNTQAMIATIASGNVHIISHPGNPKYEIDVKAVAEAAAKHQVALEINNSSFLHSRKGSEDNCRAVAAAVRDAGGWVALGSDSHTAFTMGEFEECLKILDAVDFPPERILNVSPRRLLNFLESRGMAPIAEFADL</sequence>
<feature type="chain" id="PRO_1000147134" description="Probable phosphatase YcdX">
    <location>
        <begin position="1"/>
        <end position="245"/>
    </location>
</feature>
<feature type="binding site" evidence="1">
    <location>
        <position position="7"/>
    </location>
    <ligand>
        <name>Zn(2+)</name>
        <dbReference type="ChEBI" id="CHEBI:29105"/>
        <label>1</label>
    </ligand>
</feature>
<feature type="binding site" evidence="1">
    <location>
        <position position="9"/>
    </location>
    <ligand>
        <name>Zn(2+)</name>
        <dbReference type="ChEBI" id="CHEBI:29105"/>
        <label>1</label>
    </ligand>
</feature>
<feature type="binding site" evidence="1">
    <location>
        <position position="15"/>
    </location>
    <ligand>
        <name>Zn(2+)</name>
        <dbReference type="ChEBI" id="CHEBI:29105"/>
        <label>2</label>
    </ligand>
</feature>
<feature type="binding site" evidence="1">
    <location>
        <position position="40"/>
    </location>
    <ligand>
        <name>Zn(2+)</name>
        <dbReference type="ChEBI" id="CHEBI:29105"/>
        <label>2</label>
    </ligand>
</feature>
<feature type="binding site" evidence="1">
    <location>
        <position position="73"/>
    </location>
    <ligand>
        <name>Zn(2+)</name>
        <dbReference type="ChEBI" id="CHEBI:29105"/>
        <label>1</label>
    </ligand>
</feature>
<feature type="binding site" evidence="1">
    <location>
        <position position="73"/>
    </location>
    <ligand>
        <name>Zn(2+)</name>
        <dbReference type="ChEBI" id="CHEBI:29105"/>
        <label>3</label>
    </ligand>
</feature>
<feature type="binding site" evidence="1">
    <location>
        <position position="101"/>
    </location>
    <ligand>
        <name>Zn(2+)</name>
        <dbReference type="ChEBI" id="CHEBI:29105"/>
        <label>3</label>
    </ligand>
</feature>
<feature type="binding site" evidence="1">
    <location>
        <position position="131"/>
    </location>
    <ligand>
        <name>Zn(2+)</name>
        <dbReference type="ChEBI" id="CHEBI:29105"/>
        <label>3</label>
    </ligand>
</feature>
<feature type="binding site" evidence="1">
    <location>
        <position position="192"/>
    </location>
    <ligand>
        <name>Zn(2+)</name>
        <dbReference type="ChEBI" id="CHEBI:29105"/>
        <label>1</label>
    </ligand>
</feature>
<feature type="binding site" evidence="1">
    <location>
        <position position="194"/>
    </location>
    <ligand>
        <name>Zn(2+)</name>
        <dbReference type="ChEBI" id="CHEBI:29105"/>
        <label>2</label>
    </ligand>
</feature>
<protein>
    <recommendedName>
        <fullName evidence="1">Probable phosphatase YcdX</fullName>
        <ecNumber evidence="1">3.1.3.-</ecNumber>
    </recommendedName>
</protein>
<dbReference type="EC" id="3.1.3.-" evidence="1"/>
<dbReference type="EMBL" id="CU928163">
    <property type="protein sequence ID" value="CAR12417.1"/>
    <property type="molecule type" value="Genomic_DNA"/>
</dbReference>
<dbReference type="RefSeq" id="WP_000283664.1">
    <property type="nucleotide sequence ID" value="NC_011751.1"/>
</dbReference>
<dbReference type="RefSeq" id="YP_002411961.1">
    <property type="nucleotide sequence ID" value="NC_011751.1"/>
</dbReference>
<dbReference type="SMR" id="B7N3I1"/>
<dbReference type="STRING" id="585056.ECUMN_1208"/>
<dbReference type="GeneID" id="93776384"/>
<dbReference type="KEGG" id="eum:ECUMN_1208"/>
<dbReference type="PATRIC" id="fig|585056.7.peg.1407"/>
<dbReference type="HOGENOM" id="CLU_061999_0_1_6"/>
<dbReference type="Proteomes" id="UP000007097">
    <property type="component" value="Chromosome"/>
</dbReference>
<dbReference type="GO" id="GO:0005829">
    <property type="term" value="C:cytosol"/>
    <property type="evidence" value="ECO:0007669"/>
    <property type="project" value="TreeGrafter"/>
</dbReference>
<dbReference type="GO" id="GO:0016791">
    <property type="term" value="F:phosphatase activity"/>
    <property type="evidence" value="ECO:0007669"/>
    <property type="project" value="UniProtKB-UniRule"/>
</dbReference>
<dbReference type="GO" id="GO:0008270">
    <property type="term" value="F:zinc ion binding"/>
    <property type="evidence" value="ECO:0007669"/>
    <property type="project" value="UniProtKB-UniRule"/>
</dbReference>
<dbReference type="GO" id="GO:0071978">
    <property type="term" value="P:bacterial-type flagellum-dependent swarming motility"/>
    <property type="evidence" value="ECO:0007669"/>
    <property type="project" value="TreeGrafter"/>
</dbReference>
<dbReference type="CDD" id="cd07437">
    <property type="entry name" value="PHP_HisPPase_Ycdx_like"/>
    <property type="match status" value="1"/>
</dbReference>
<dbReference type="FunFam" id="3.20.20.140:FF:000008">
    <property type="entry name" value="Probable phosphatase YcdX"/>
    <property type="match status" value="1"/>
</dbReference>
<dbReference type="Gene3D" id="3.20.20.140">
    <property type="entry name" value="Metal-dependent hydrolases"/>
    <property type="match status" value="1"/>
</dbReference>
<dbReference type="HAMAP" id="MF_01561">
    <property type="entry name" value="YcdX_phosphat"/>
    <property type="match status" value="1"/>
</dbReference>
<dbReference type="InterPro" id="IPR023710">
    <property type="entry name" value="Phosphatase_YcdX_put"/>
</dbReference>
<dbReference type="InterPro" id="IPR004013">
    <property type="entry name" value="PHP_dom"/>
</dbReference>
<dbReference type="InterPro" id="IPR050243">
    <property type="entry name" value="PHP_phosphatase"/>
</dbReference>
<dbReference type="InterPro" id="IPR003141">
    <property type="entry name" value="Pol/His_phosphatase_N"/>
</dbReference>
<dbReference type="InterPro" id="IPR016195">
    <property type="entry name" value="Pol/histidinol_Pase-like"/>
</dbReference>
<dbReference type="NCBIfam" id="NF006702">
    <property type="entry name" value="PRK09248.1"/>
    <property type="match status" value="1"/>
</dbReference>
<dbReference type="PANTHER" id="PTHR36928">
    <property type="entry name" value="PHOSPHATASE YCDX-RELATED"/>
    <property type="match status" value="1"/>
</dbReference>
<dbReference type="PANTHER" id="PTHR36928:SF1">
    <property type="entry name" value="PHOSPHATASE YCDX-RELATED"/>
    <property type="match status" value="1"/>
</dbReference>
<dbReference type="Pfam" id="PF02811">
    <property type="entry name" value="PHP"/>
    <property type="match status" value="1"/>
</dbReference>
<dbReference type="SMART" id="SM00481">
    <property type="entry name" value="POLIIIAc"/>
    <property type="match status" value="1"/>
</dbReference>
<dbReference type="SUPFAM" id="SSF89550">
    <property type="entry name" value="PHP domain-like"/>
    <property type="match status" value="1"/>
</dbReference>
<proteinExistence type="inferred from homology"/>
<organism>
    <name type="scientific">Escherichia coli O17:K52:H18 (strain UMN026 / ExPEC)</name>
    <dbReference type="NCBI Taxonomy" id="585056"/>
    <lineage>
        <taxon>Bacteria</taxon>
        <taxon>Pseudomonadati</taxon>
        <taxon>Pseudomonadota</taxon>
        <taxon>Gammaproteobacteria</taxon>
        <taxon>Enterobacterales</taxon>
        <taxon>Enterobacteriaceae</taxon>
        <taxon>Escherichia</taxon>
    </lineage>
</organism>
<comment type="cofactor">
    <cofactor evidence="1">
        <name>Zn(2+)</name>
        <dbReference type="ChEBI" id="CHEBI:29105"/>
    </cofactor>
    <text evidence="1">Binds 3 Zn(2+) ions per subunit.</text>
</comment>
<comment type="subunit">
    <text evidence="1">Homotrimer.</text>
</comment>
<comment type="similarity">
    <text evidence="1">Belongs to the PHP family.</text>
</comment>
<gene>
    <name evidence="1" type="primary">ycdX</name>
    <name type="ordered locus">ECUMN_1208</name>
</gene>